<protein>
    <recommendedName>
        <fullName>ECF RNA polymerase sigma factor SigK</fullName>
        <shortName>ECF sigma factor SigK</shortName>
    </recommendedName>
    <alternativeName>
        <fullName>Alternative RNA polymerase sigma factor SigK</fullName>
    </alternativeName>
    <alternativeName>
        <fullName>RNA polymerase sigma-K factor</fullName>
        <shortName>Sigma-K factor</shortName>
    </alternativeName>
</protein>
<reference key="1">
    <citation type="submission" date="2007-02" db="EMBL/GenBank/DDBJ databases">
        <title>Complete sequence of Mycobacterium sp. JLS.</title>
        <authorList>
            <consortium name="US DOE Joint Genome Institute"/>
            <person name="Copeland A."/>
            <person name="Lucas S."/>
            <person name="Lapidus A."/>
            <person name="Barry K."/>
            <person name="Detter J.C."/>
            <person name="Glavina del Rio T."/>
            <person name="Hammon N."/>
            <person name="Israni S."/>
            <person name="Dalin E."/>
            <person name="Tice H."/>
            <person name="Pitluck S."/>
            <person name="Chain P."/>
            <person name="Malfatti S."/>
            <person name="Shin M."/>
            <person name="Vergez L."/>
            <person name="Schmutz J."/>
            <person name="Larimer F."/>
            <person name="Land M."/>
            <person name="Hauser L."/>
            <person name="Kyrpides N."/>
            <person name="Mikhailova N."/>
            <person name="Miller C.D."/>
            <person name="Anderson A.J."/>
            <person name="Sims R.C."/>
            <person name="Richardson P."/>
        </authorList>
    </citation>
    <scope>NUCLEOTIDE SEQUENCE [LARGE SCALE GENOMIC DNA]</scope>
    <source>
        <strain>JLS</strain>
    </source>
</reference>
<proteinExistence type="inferred from homology"/>
<feature type="chain" id="PRO_0000313841" description="ECF RNA polymerase sigma factor SigK">
    <location>
        <begin position="1"/>
        <end position="193"/>
    </location>
</feature>
<feature type="DNA-binding region" description="H-T-H motif" evidence="1">
    <location>
        <begin position="161"/>
        <end position="180"/>
    </location>
</feature>
<feature type="region of interest" description="Sigma-70 factor domain-2">
    <location>
        <begin position="35"/>
        <end position="101"/>
    </location>
</feature>
<feature type="region of interest" description="Sigma-70 factor domain-4">
    <location>
        <begin position="140"/>
        <end position="187"/>
    </location>
</feature>
<feature type="short sequence motif" description="Polymerase core binding">
    <location>
        <begin position="59"/>
        <end position="62"/>
    </location>
</feature>
<name>SIGK_MYCSJ</name>
<accession>A3Q5U0</accession>
<gene>
    <name type="primary">sigK</name>
    <name type="ordered locus">Mjls_4752</name>
</gene>
<sequence>MTALTQPVRLPFVTTDLDVLLRQVAERDVDAFAALYDRTRSRVYGMVTRVLRDPGYSEETTQDIYLQVWRSAGSYDPKAGSPMAWLLTLAHRRAVDRVRSEEAASQRESRYGAASVDPPVDHVADSVILLDERRRVVDCMGSLSDLQREAIQLAYYEGLTYVQVSERLSANLATIKSRMRDGIRGLKNCLGMS</sequence>
<keyword id="KW-0238">DNA-binding</keyword>
<keyword id="KW-0731">Sigma factor</keyword>
<keyword id="KW-0804">Transcription</keyword>
<keyword id="KW-0805">Transcription regulation</keyword>
<comment type="function">
    <text evidence="1">Sigma factors are initiation factors that promote the attachment of RNA polymerase to specific initiation sites and are then released. Extracytoplasmic function (ECF) sigma factors are held in an inactive form by an anti-sigma factor until released by regulated intramembrane proteolysis (By similarity).</text>
</comment>
<comment type="subunit">
    <text evidence="1">Interacts transiently with the RNA polymerase catalytic core formed by RpoA, RpoB, RpoC and RpoZ (2 alpha, 1 beta, 1 beta' and 1 omega subunit) to form the RNA polymerase holoenzyme that can initiate transcription. Interacts (via sigma-70 factor domain 4) with anti-sigma-K factor RskA (By similarity).</text>
</comment>
<comment type="domain">
    <text evidence="1">The sigma-70 factor domain-2 mediates sequence-specific interaction with the -10 element in promoter DNA, and plays an important role in melting the double-stranded DNA and the formation of the transcription bubble. The sigma-70 factor domain-2 mediates interaction with the RNA polymerase subunits RpoB and RpoC (By similarity).</text>
</comment>
<comment type="domain">
    <text evidence="1">The sigma-70 factor domain-4 contains a helix-turn-helix (H-T-H) motif that mediates interaction with the -35 element in promoter DNA. The domain also mediates interaction with the RNA polymerase subunit RpoA. Interactions between sigma-70 factor domain-4 and anti-sigma factors prevents interaction of sigma factors with the RNA polymerase catalytic core (By similarity).</text>
</comment>
<comment type="miscellaneous">
    <text evidence="1">Extracytoplasmic function (ECF) sigma factors are held in an inactive form by an anti-sigma factor until released by regulated intramembrane proteolysis (RIP). RIP occurs when an extracytoplasmic signal triggers a concerted proteolytic cascade to transmit information and elicit cellular responses. The membrane-spanning anti-sigma factor is first cut extracytoplasmically (site-1 protease, S1P), then within the membrane itself (site-2 protease, S2P, Rip1), while cytoplasmic proteases finish degrading the regulatory protein, liberating SigK (By similarity).</text>
</comment>
<comment type="similarity">
    <text evidence="2">Belongs to the sigma-70 factor family. ECF subfamily.</text>
</comment>
<dbReference type="EMBL" id="CP000580">
    <property type="protein sequence ID" value="ABO00518.1"/>
    <property type="molecule type" value="Genomic_DNA"/>
</dbReference>
<dbReference type="SMR" id="A3Q5U0"/>
<dbReference type="KEGG" id="mjl:Mjls_4752"/>
<dbReference type="HOGENOM" id="CLU_047691_9_3_11"/>
<dbReference type="BioCyc" id="MSP164757:G1G8C-4797-MONOMER"/>
<dbReference type="GO" id="GO:0003677">
    <property type="term" value="F:DNA binding"/>
    <property type="evidence" value="ECO:0007669"/>
    <property type="project" value="UniProtKB-KW"/>
</dbReference>
<dbReference type="GO" id="GO:0016987">
    <property type="term" value="F:sigma factor activity"/>
    <property type="evidence" value="ECO:0007669"/>
    <property type="project" value="UniProtKB-KW"/>
</dbReference>
<dbReference type="GO" id="GO:0006352">
    <property type="term" value="P:DNA-templated transcription initiation"/>
    <property type="evidence" value="ECO:0007669"/>
    <property type="project" value="InterPro"/>
</dbReference>
<dbReference type="CDD" id="cd06171">
    <property type="entry name" value="Sigma70_r4"/>
    <property type="match status" value="1"/>
</dbReference>
<dbReference type="Gene3D" id="1.10.1740.10">
    <property type="match status" value="1"/>
</dbReference>
<dbReference type="Gene3D" id="1.10.10.10">
    <property type="entry name" value="Winged helix-like DNA-binding domain superfamily/Winged helix DNA-binding domain"/>
    <property type="match status" value="1"/>
</dbReference>
<dbReference type="InterPro" id="IPR039425">
    <property type="entry name" value="RNA_pol_sigma-70-like"/>
</dbReference>
<dbReference type="InterPro" id="IPR014284">
    <property type="entry name" value="RNA_pol_sigma-70_dom"/>
</dbReference>
<dbReference type="InterPro" id="IPR007627">
    <property type="entry name" value="RNA_pol_sigma70_r2"/>
</dbReference>
<dbReference type="InterPro" id="IPR007630">
    <property type="entry name" value="RNA_pol_sigma70_r4"/>
</dbReference>
<dbReference type="InterPro" id="IPR013325">
    <property type="entry name" value="RNA_pol_sigma_r2"/>
</dbReference>
<dbReference type="InterPro" id="IPR013324">
    <property type="entry name" value="RNA_pol_sigma_r3/r4-like"/>
</dbReference>
<dbReference type="InterPro" id="IPR036388">
    <property type="entry name" value="WH-like_DNA-bd_sf"/>
</dbReference>
<dbReference type="NCBIfam" id="NF007228">
    <property type="entry name" value="PRK09646.1"/>
    <property type="match status" value="1"/>
</dbReference>
<dbReference type="NCBIfam" id="TIGR02937">
    <property type="entry name" value="sigma70-ECF"/>
    <property type="match status" value="1"/>
</dbReference>
<dbReference type="PANTHER" id="PTHR43133:SF66">
    <property type="entry name" value="ECF RNA POLYMERASE SIGMA FACTOR SIGK"/>
    <property type="match status" value="1"/>
</dbReference>
<dbReference type="PANTHER" id="PTHR43133">
    <property type="entry name" value="RNA POLYMERASE ECF-TYPE SIGMA FACTO"/>
    <property type="match status" value="1"/>
</dbReference>
<dbReference type="Pfam" id="PF04542">
    <property type="entry name" value="Sigma70_r2"/>
    <property type="match status" value="1"/>
</dbReference>
<dbReference type="Pfam" id="PF04545">
    <property type="entry name" value="Sigma70_r4"/>
    <property type="match status" value="1"/>
</dbReference>
<dbReference type="SUPFAM" id="SSF88946">
    <property type="entry name" value="Sigma2 domain of RNA polymerase sigma factors"/>
    <property type="match status" value="1"/>
</dbReference>
<dbReference type="SUPFAM" id="SSF88659">
    <property type="entry name" value="Sigma3 and sigma4 domains of RNA polymerase sigma factors"/>
    <property type="match status" value="1"/>
</dbReference>
<evidence type="ECO:0000250" key="1"/>
<evidence type="ECO:0000305" key="2"/>
<organism>
    <name type="scientific">Mycobacterium sp. (strain JLS)</name>
    <dbReference type="NCBI Taxonomy" id="164757"/>
    <lineage>
        <taxon>Bacteria</taxon>
        <taxon>Bacillati</taxon>
        <taxon>Actinomycetota</taxon>
        <taxon>Actinomycetes</taxon>
        <taxon>Mycobacteriales</taxon>
        <taxon>Mycobacteriaceae</taxon>
        <taxon>Mycobacterium</taxon>
    </lineage>
</organism>